<comment type="function">
    <text evidence="1">Cyclic nucleotide-regulated potassium channel activated by cAMP.</text>
</comment>
<comment type="subunit">
    <text evidence="1">Homotetramer.</text>
</comment>
<comment type="interaction">
    <interactant intactId="EBI-15658025">
        <id>Q98GN8</id>
    </interactant>
    <interactant intactId="EBI-15658025">
        <id>Q98GN8</id>
        <label>mll3241</label>
    </interactant>
    <organismsDiffer>false</organismsDiffer>
    <experiments>2</experiments>
</comment>
<comment type="subcellular location">
    <subcellularLocation>
        <location>Cell membrane</location>
        <topology>Multi-pass membrane protein</topology>
    </subcellularLocation>
</comment>
<comment type="similarity">
    <text evidence="3">Belongs to the potassium channel family.</text>
</comment>
<evidence type="ECO:0000269" key="1">
    <source>
    </source>
</evidence>
<evidence type="ECO:0000269" key="2">
    <source>
    </source>
</evidence>
<evidence type="ECO:0000305" key="3"/>
<evidence type="ECO:0007744" key="4">
    <source>
        <dbReference type="PDB" id="1U12"/>
    </source>
</evidence>
<evidence type="ECO:0007744" key="5">
    <source>
        <dbReference type="PDB" id="1VP6"/>
    </source>
</evidence>
<evidence type="ECO:0007829" key="6">
    <source>
        <dbReference type="PDB" id="3BEH"/>
    </source>
</evidence>
<evidence type="ECO:0007829" key="7">
    <source>
        <dbReference type="PDB" id="3CLP"/>
    </source>
</evidence>
<evidence type="ECO:0007829" key="8">
    <source>
        <dbReference type="PDB" id="4MUV"/>
    </source>
</evidence>
<name>CNGK1_RHILO</name>
<dbReference type="EMBL" id="BA000012">
    <property type="protein sequence ID" value="BAB50178.1"/>
    <property type="molecule type" value="Genomic_DNA"/>
</dbReference>
<dbReference type="RefSeq" id="WP_010911524.1">
    <property type="nucleotide sequence ID" value="NC_002678.2"/>
</dbReference>
<dbReference type="PDB" id="1U12">
    <property type="method" value="X-ray"/>
    <property type="resolution" value="2.70 A"/>
    <property type="chains" value="A/B=218-355"/>
</dbReference>
<dbReference type="PDB" id="1VP6">
    <property type="method" value="X-ray"/>
    <property type="resolution" value="1.70 A"/>
    <property type="chains" value="A/C=218-355"/>
</dbReference>
<dbReference type="PDB" id="2K0G">
    <property type="method" value="NMR"/>
    <property type="chains" value="A=216-355"/>
</dbReference>
<dbReference type="PDB" id="2KXL">
    <property type="method" value="NMR"/>
    <property type="chains" value="A=216-355"/>
</dbReference>
<dbReference type="PDB" id="2ZD9">
    <property type="method" value="X-ray"/>
    <property type="resolution" value="4.00 A"/>
    <property type="chains" value="A/B/C/D=1-355"/>
</dbReference>
<dbReference type="PDB" id="3BEH">
    <property type="method" value="X-ray"/>
    <property type="resolution" value="3.10 A"/>
    <property type="chains" value="A/B/C/D=1-355"/>
</dbReference>
<dbReference type="PDB" id="3CL1">
    <property type="method" value="X-ray"/>
    <property type="resolution" value="2.40 A"/>
    <property type="chains" value="A/B=216-355"/>
</dbReference>
<dbReference type="PDB" id="3CLP">
    <property type="method" value="X-ray"/>
    <property type="resolution" value="2.00 A"/>
    <property type="chains" value="A/C=216-355"/>
</dbReference>
<dbReference type="PDB" id="3CO2">
    <property type="method" value="X-ray"/>
    <property type="resolution" value="2.90 A"/>
    <property type="chains" value="A/B/C/D=216-355"/>
</dbReference>
<dbReference type="PDB" id="4CHV">
    <property type="method" value="EM"/>
    <property type="resolution" value="7.00 A"/>
    <property type="chains" value="A/B/C/D=1-355"/>
</dbReference>
<dbReference type="PDB" id="4CHW">
    <property type="method" value="EM"/>
    <property type="resolution" value="7.00 A"/>
    <property type="chains" value="A/B/C/D=1-355"/>
</dbReference>
<dbReference type="PDB" id="4MUV">
    <property type="method" value="X-ray"/>
    <property type="resolution" value="1.25 A"/>
    <property type="chains" value="A/B=216-355"/>
</dbReference>
<dbReference type="PDB" id="6EO1">
    <property type="method" value="EM"/>
    <property type="resolution" value="4.50 A"/>
    <property type="chains" value="A/B/C/D=1-355"/>
</dbReference>
<dbReference type="PDB" id="6I9D">
    <property type="method" value="EM"/>
    <property type="resolution" value="4.00 A"/>
    <property type="chains" value="A/B/C/D=1-355"/>
</dbReference>
<dbReference type="PDB" id="6IAX">
    <property type="method" value="EM"/>
    <property type="resolution" value="5.20 A"/>
    <property type="chains" value="A/B/C/D=1-355"/>
</dbReference>
<dbReference type="PDB" id="6M63">
    <property type="method" value="X-ray"/>
    <property type="resolution" value="2.25 A"/>
    <property type="chains" value="A/B=213-284"/>
</dbReference>
<dbReference type="PDB" id="6QCY">
    <property type="method" value="EM"/>
    <property type="resolution" value="4.70 A"/>
    <property type="chains" value="A/B/C/D=1-355"/>
</dbReference>
<dbReference type="PDB" id="6QCZ">
    <property type="method" value="EM"/>
    <property type="resolution" value="4.40 A"/>
    <property type="chains" value="A/B/C/D=1-355"/>
</dbReference>
<dbReference type="PDB" id="6QD0">
    <property type="method" value="EM"/>
    <property type="resolution" value="4.50 A"/>
    <property type="chains" value="A/B/C/D=1-355"/>
</dbReference>
<dbReference type="PDB" id="6QD1">
    <property type="method" value="EM"/>
    <property type="resolution" value="5.40 A"/>
    <property type="chains" value="A/B/C/D=1-355"/>
</dbReference>
<dbReference type="PDB" id="6QD2">
    <property type="method" value="EM"/>
    <property type="resolution" value="4.80 A"/>
    <property type="chains" value="A/B/C/D=1-355"/>
</dbReference>
<dbReference type="PDB" id="6QD3">
    <property type="method" value="EM"/>
    <property type="resolution" value="5.00 A"/>
    <property type="chains" value="A/B/C/D=1-355"/>
</dbReference>
<dbReference type="PDB" id="6QD4">
    <property type="method" value="EM"/>
    <property type="resolution" value="5.60 A"/>
    <property type="chains" value="A/B/C/D=1-355"/>
</dbReference>
<dbReference type="PDBsum" id="1U12"/>
<dbReference type="PDBsum" id="1VP6"/>
<dbReference type="PDBsum" id="2K0G"/>
<dbReference type="PDBsum" id="2KXL"/>
<dbReference type="PDBsum" id="2ZD9"/>
<dbReference type="PDBsum" id="3BEH"/>
<dbReference type="PDBsum" id="3CL1"/>
<dbReference type="PDBsum" id="3CLP"/>
<dbReference type="PDBsum" id="3CO2"/>
<dbReference type="PDBsum" id="4CHV"/>
<dbReference type="PDBsum" id="4CHW"/>
<dbReference type="PDBsum" id="4MUV"/>
<dbReference type="PDBsum" id="6EO1"/>
<dbReference type="PDBsum" id="6I9D"/>
<dbReference type="PDBsum" id="6IAX"/>
<dbReference type="PDBsum" id="6M63"/>
<dbReference type="PDBsum" id="6QCY"/>
<dbReference type="PDBsum" id="6QCZ"/>
<dbReference type="PDBsum" id="6QD0"/>
<dbReference type="PDBsum" id="6QD1"/>
<dbReference type="PDBsum" id="6QD2"/>
<dbReference type="PDBsum" id="6QD3"/>
<dbReference type="PDBsum" id="6QD4"/>
<dbReference type="BMRB" id="Q98GN8"/>
<dbReference type="EMDB" id="EMD-2526"/>
<dbReference type="EMDB" id="EMD-2527"/>
<dbReference type="EMDB" id="EMD-3907"/>
<dbReference type="EMDB" id="EMD-4432"/>
<dbReference type="EMDB" id="EMD-4441"/>
<dbReference type="EMDB" id="EMD-4513"/>
<dbReference type="EMDB" id="EMD-4514"/>
<dbReference type="EMDB" id="EMD-4515"/>
<dbReference type="EMDB" id="EMD-4516"/>
<dbReference type="EMDB" id="EMD-4517"/>
<dbReference type="EMDB" id="EMD-4518"/>
<dbReference type="EMDB" id="EMD-4519"/>
<dbReference type="SMR" id="Q98GN8"/>
<dbReference type="DIP" id="DIP-29507N"/>
<dbReference type="DrugBank" id="DB02527">
    <property type="generic name" value="Cyclic adenosine monophosphate"/>
</dbReference>
<dbReference type="DrugBank" id="DB04147">
    <property type="generic name" value="Dodecyldimethylamine N-oxide"/>
</dbReference>
<dbReference type="TCDB" id="1.A.1.25.1">
    <property type="family name" value="the voltage-gated ion channel (vic) superfamily"/>
</dbReference>
<dbReference type="KEGG" id="mlo:mll3241"/>
<dbReference type="PATRIC" id="fig|266835.9.peg.2584"/>
<dbReference type="eggNOG" id="COG0664">
    <property type="taxonomic scope" value="Bacteria"/>
</dbReference>
<dbReference type="HOGENOM" id="CLU_011722_1_2_5"/>
<dbReference type="EvolutionaryTrace" id="Q98GN8"/>
<dbReference type="Proteomes" id="UP000000552">
    <property type="component" value="Chromosome"/>
</dbReference>
<dbReference type="GO" id="GO:0005886">
    <property type="term" value="C:plasma membrane"/>
    <property type="evidence" value="ECO:0007669"/>
    <property type="project" value="UniProtKB-SubCell"/>
</dbReference>
<dbReference type="GO" id="GO:0030552">
    <property type="term" value="F:cAMP binding"/>
    <property type="evidence" value="ECO:0007669"/>
    <property type="project" value="UniProtKB-KW"/>
</dbReference>
<dbReference type="GO" id="GO:0042802">
    <property type="term" value="F:identical protein binding"/>
    <property type="evidence" value="ECO:0000353"/>
    <property type="project" value="IntAct"/>
</dbReference>
<dbReference type="GO" id="GO:0005221">
    <property type="term" value="F:intracellularly cyclic nucleotide-activated monoatomic cation channel activity"/>
    <property type="evidence" value="ECO:0007669"/>
    <property type="project" value="InterPro"/>
</dbReference>
<dbReference type="GO" id="GO:0005267">
    <property type="term" value="F:potassium channel activity"/>
    <property type="evidence" value="ECO:0007669"/>
    <property type="project" value="UniProtKB-KW"/>
</dbReference>
<dbReference type="GO" id="GO:0044877">
    <property type="term" value="F:protein-containing complex binding"/>
    <property type="evidence" value="ECO:0007669"/>
    <property type="project" value="TreeGrafter"/>
</dbReference>
<dbReference type="CDD" id="cd00038">
    <property type="entry name" value="CAP_ED"/>
    <property type="match status" value="1"/>
</dbReference>
<dbReference type="FunFam" id="1.10.287.70:FF:000181">
    <property type="entry name" value="Cyclic nucleotide-gated potassium channel mll3241"/>
    <property type="match status" value="1"/>
</dbReference>
<dbReference type="FunFam" id="2.60.120.10:FF:000284">
    <property type="entry name" value="Cyclic nucleotide-gated potassium channel mll3241"/>
    <property type="match status" value="1"/>
</dbReference>
<dbReference type="Gene3D" id="1.10.287.70">
    <property type="match status" value="1"/>
</dbReference>
<dbReference type="Gene3D" id="1.20.5.110">
    <property type="match status" value="1"/>
</dbReference>
<dbReference type="Gene3D" id="2.60.120.10">
    <property type="entry name" value="Jelly Rolls"/>
    <property type="match status" value="1"/>
</dbReference>
<dbReference type="Gene3D" id="1.20.120.540">
    <property type="entry name" value="Voltage-gated potassium channels"/>
    <property type="match status" value="1"/>
</dbReference>
<dbReference type="InterPro" id="IPR050866">
    <property type="entry name" value="CNG_cation_channel"/>
</dbReference>
<dbReference type="InterPro" id="IPR018488">
    <property type="entry name" value="cNMP-bd_CS"/>
</dbReference>
<dbReference type="InterPro" id="IPR000595">
    <property type="entry name" value="cNMP-bd_dom"/>
</dbReference>
<dbReference type="InterPro" id="IPR018490">
    <property type="entry name" value="cNMP-bd_dom_sf"/>
</dbReference>
<dbReference type="InterPro" id="IPR005821">
    <property type="entry name" value="Ion_trans_dom"/>
</dbReference>
<dbReference type="InterPro" id="IPR027378">
    <property type="entry name" value="Nucleotide_channel_N"/>
</dbReference>
<dbReference type="InterPro" id="IPR014710">
    <property type="entry name" value="RmlC-like_jellyroll"/>
</dbReference>
<dbReference type="PANTHER" id="PTHR45638">
    <property type="entry name" value="CYCLIC NUCLEOTIDE-GATED CATION CHANNEL SUBUNIT A"/>
    <property type="match status" value="1"/>
</dbReference>
<dbReference type="PANTHER" id="PTHR45638:SF11">
    <property type="entry name" value="CYCLIC NUCLEOTIDE-GATED CATION CHANNEL SUBUNIT A"/>
    <property type="match status" value="1"/>
</dbReference>
<dbReference type="Pfam" id="PF00027">
    <property type="entry name" value="cNMP_binding"/>
    <property type="match status" value="1"/>
</dbReference>
<dbReference type="Pfam" id="PF00520">
    <property type="entry name" value="Ion_trans"/>
    <property type="match status" value="1"/>
</dbReference>
<dbReference type="PRINTS" id="PR00169">
    <property type="entry name" value="KCHANNEL"/>
</dbReference>
<dbReference type="SMART" id="SM00100">
    <property type="entry name" value="cNMP"/>
    <property type="match status" value="1"/>
</dbReference>
<dbReference type="SUPFAM" id="SSF51206">
    <property type="entry name" value="cAMP-binding domain-like"/>
    <property type="match status" value="1"/>
</dbReference>
<dbReference type="SUPFAM" id="SSF81324">
    <property type="entry name" value="Voltage-gated potassium channels"/>
    <property type="match status" value="1"/>
</dbReference>
<dbReference type="PROSITE" id="PS00888">
    <property type="entry name" value="CNMP_BINDING_1"/>
    <property type="match status" value="1"/>
</dbReference>
<dbReference type="PROSITE" id="PS00889">
    <property type="entry name" value="CNMP_BINDING_2"/>
    <property type="match status" value="1"/>
</dbReference>
<dbReference type="PROSITE" id="PS50042">
    <property type="entry name" value="CNMP_BINDING_3"/>
    <property type="match status" value="1"/>
</dbReference>
<accession>Q98GN8</accession>
<protein>
    <recommendedName>
        <fullName>Cyclic nucleotide-gated potassium channel mll3241</fullName>
    </recommendedName>
    <alternativeName>
        <fullName>MlotiK1 channel</fullName>
    </alternativeName>
</protein>
<keyword id="KW-0002">3D-structure</keyword>
<keyword id="KW-0114">cAMP</keyword>
<keyword id="KW-0116">cAMP-binding</keyword>
<keyword id="KW-1003">Cell membrane</keyword>
<keyword id="KW-0407">Ion channel</keyword>
<keyword id="KW-0406">Ion transport</keyword>
<keyword id="KW-1071">Ligand-gated ion channel</keyword>
<keyword id="KW-0472">Membrane</keyword>
<keyword id="KW-0547">Nucleotide-binding</keyword>
<keyword id="KW-0630">Potassium</keyword>
<keyword id="KW-0631">Potassium channel</keyword>
<keyword id="KW-0633">Potassium transport</keyword>
<keyword id="KW-0812">Transmembrane</keyword>
<keyword id="KW-1133">Transmembrane helix</keyword>
<keyword id="KW-0813">Transport</keyword>
<organism>
    <name type="scientific">Mesorhizobium japonicum (strain LMG 29417 / CECT 9101 / MAFF 303099)</name>
    <name type="common">Mesorhizobium loti (strain MAFF 303099)</name>
    <dbReference type="NCBI Taxonomy" id="266835"/>
    <lineage>
        <taxon>Bacteria</taxon>
        <taxon>Pseudomonadati</taxon>
        <taxon>Pseudomonadota</taxon>
        <taxon>Alphaproteobacteria</taxon>
        <taxon>Hyphomicrobiales</taxon>
        <taxon>Phyllobacteriaceae</taxon>
        <taxon>Mesorhizobium</taxon>
    </lineage>
</organism>
<proteinExistence type="evidence at protein level"/>
<reference key="1">
    <citation type="journal article" date="2000" name="DNA Res.">
        <title>Complete genome structure of the nitrogen-fixing symbiotic bacterium Mesorhizobium loti.</title>
        <authorList>
            <person name="Kaneko T."/>
            <person name="Nakamura Y."/>
            <person name="Sato S."/>
            <person name="Asamizu E."/>
            <person name="Kato T."/>
            <person name="Sasamoto S."/>
            <person name="Watanabe A."/>
            <person name="Idesawa K."/>
            <person name="Ishikawa A."/>
            <person name="Kawashima K."/>
            <person name="Kimura T."/>
            <person name="Kishida Y."/>
            <person name="Kiyokawa C."/>
            <person name="Kohara M."/>
            <person name="Matsumoto M."/>
            <person name="Matsuno A."/>
            <person name="Mochizuki Y."/>
            <person name="Nakayama S."/>
            <person name="Nakazaki N."/>
            <person name="Shimpo S."/>
            <person name="Sugimoto M."/>
            <person name="Takeuchi C."/>
            <person name="Yamada M."/>
            <person name="Tabata S."/>
        </authorList>
    </citation>
    <scope>NUCLEOTIDE SEQUENCE [LARGE SCALE GENOMIC DNA]</scope>
    <source>
        <strain>LMG 29417 / CECT 9101 / MAFF 303099</strain>
    </source>
</reference>
<reference evidence="4 5" key="2">
    <citation type="journal article" date="2004" name="Cell">
        <title>Structural basis of ligand activation in a cyclic nucleotide regulated potassium channel.</title>
        <authorList>
            <person name="Clayton G.M."/>
            <person name="Silverman W.R."/>
            <person name="Heginbotham L."/>
            <person name="Morais-Cabral J.H."/>
        </authorList>
    </citation>
    <scope>X-RAY CRYSTALLOGRAPHY (1.7 ANGSTROMS) OF 218-355 IN COMPLEXES WITH CAMP</scope>
    <scope>FUNCTION</scope>
    <scope>SUBUNIT</scope>
    <scope>MUTAGENESIS OF TRP-227 AND ARG-348</scope>
</reference>
<reference key="3">
    <citation type="journal article" date="2008" name="Proc. Natl. Acad. Sci. U.S.A.">
        <title>Structure of the transmembrane regions of a bacterial cyclic nucleotide-regulated channel.</title>
        <authorList>
            <person name="Clayton G.M."/>
            <person name="Altieri S."/>
            <person name="Heginbotham L."/>
            <person name="Unger V.M."/>
            <person name="Morais-Cabral J.H."/>
        </authorList>
    </citation>
    <scope>X-RAY CRYSTALLOGRAPHY (3.1 ANGSTROMS)</scope>
    <scope>MEMBRANE TOPOLOGY</scope>
    <scope>MUTAGENESIS OF PHE-203 AND TYR-215</scope>
</reference>
<sequence length="355" mass="37735">MSVLPFLRIYAPLNAVLAAPGLLAVAALTIPDMSGRSRLALAALLAVIWGAYLLQLAATLLKRRAGVVRDRTPKIAIDVLAVLVPLAAFLLDGSPDWSLYCAVWLLKPLRDSTFFPVLGRVLANEARNLIGVTTLFGVVLFAVALAAYVIERDIQPEKFGSIPQAMWWAVVTLSTTGYGDTIPQSFAGRVLAGAVMMSGIGIFGLWAGILATGFYQEVRRGDFVRNWQLVAAVPLFQKLGPAVLVEIVRALRARTVPAGAVICRIGEPGDRMFFVVEGSVSVATPNPVELGPGAFFGEMALISGEPRSATVSAATTVSLLSLHSADFQMLCSSSPEIAEIFRKTALERRGAAASA</sequence>
<gene>
    <name type="ordered locus">mll3241</name>
</gene>
<feature type="chain" id="PRO_0000351501" description="Cyclic nucleotide-gated potassium channel mll3241">
    <location>
        <begin position="1"/>
        <end position="355"/>
    </location>
</feature>
<feature type="topological domain" description="Cytoplasmic">
    <location>
        <begin position="1"/>
        <end position="12"/>
    </location>
</feature>
<feature type="transmembrane region" description="Helical; Name=Segment S1">
    <location>
        <begin position="13"/>
        <end position="30"/>
    </location>
</feature>
<feature type="topological domain" description="Periplasmic">
    <location>
        <begin position="31"/>
        <end position="38"/>
    </location>
</feature>
<feature type="transmembrane region" description="Helical; Name=Segment S2">
    <location>
        <begin position="39"/>
        <end position="61"/>
    </location>
</feature>
<feature type="topological domain" description="Cytoplasmic">
    <location>
        <begin position="62"/>
        <end position="74"/>
    </location>
</feature>
<feature type="transmembrane region" description="Helical; Name=Segment S3">
    <location>
        <begin position="75"/>
        <end position="94"/>
    </location>
</feature>
<feature type="transmembrane region" description="Helical; Name=Segment S4">
    <location>
        <begin position="95"/>
        <end position="112"/>
    </location>
</feature>
<feature type="topological domain" description="Cytoplasmic">
    <location>
        <begin position="113"/>
        <end position="129"/>
    </location>
</feature>
<feature type="transmembrane region" description="Helical; Name=Segment S5">
    <location>
        <begin position="130"/>
        <end position="150"/>
    </location>
</feature>
<feature type="topological domain" description="Periplasmic">
    <location>
        <begin position="151"/>
        <end position="161"/>
    </location>
</feature>
<feature type="intramembrane region" description="Pore-forming">
    <location>
        <begin position="162"/>
        <end position="180"/>
    </location>
</feature>
<feature type="topological domain" description="Periplasmic">
    <location>
        <begin position="181"/>
        <end position="185"/>
    </location>
</feature>
<feature type="transmembrane region" description="Helical; Name=Segment S6">
    <location>
        <begin position="186"/>
        <end position="210"/>
    </location>
</feature>
<feature type="topological domain" description="Cytoplasmic">
    <location>
        <begin position="211"/>
        <end position="355"/>
    </location>
</feature>
<feature type="short sequence motif" description="Selectivity filter" evidence="3">
    <location>
        <begin position="175"/>
        <end position="180"/>
    </location>
</feature>
<feature type="binding site" evidence="5">
    <location>
        <begin position="297"/>
        <end position="298"/>
    </location>
    <ligand>
        <name>3',5'-cyclic AMP</name>
        <dbReference type="ChEBI" id="CHEBI:58165"/>
    </ligand>
</feature>
<feature type="binding site" evidence="5">
    <location>
        <begin position="307"/>
        <end position="308"/>
    </location>
    <ligand>
        <name>3',5'-cyclic AMP</name>
        <dbReference type="ChEBI" id="CHEBI:58165"/>
    </ligand>
</feature>
<feature type="binding site" evidence="5">
    <location>
        <position position="348"/>
    </location>
    <ligand>
        <name>3',5'-cyclic AMP</name>
        <dbReference type="ChEBI" id="CHEBI:58165"/>
    </ligand>
</feature>
<feature type="mutagenesis site" description="Increased channel conductance." evidence="2">
    <original>F</original>
    <variation>A</variation>
    <location>
        <position position="203"/>
    </location>
</feature>
<feature type="mutagenesis site" description="Increased channel conductance." evidence="2">
    <original>Y</original>
    <variation>A</variation>
    <location>
        <position position="215"/>
    </location>
</feature>
<feature type="mutagenesis site" description="Loss of channel activity." evidence="1">
    <original>W</original>
    <variation>A</variation>
    <location>
        <position position="227"/>
    </location>
</feature>
<feature type="mutagenesis site" description="Loss of cAMP binding. Loss of channel activity." evidence="1">
    <original>R</original>
    <variation>A</variation>
    <location>
        <position position="348"/>
    </location>
</feature>
<feature type="strand" evidence="6">
    <location>
        <begin position="9"/>
        <end position="12"/>
    </location>
</feature>
<feature type="helix" evidence="6">
    <location>
        <begin position="13"/>
        <end position="28"/>
    </location>
</feature>
<feature type="strand" evidence="6">
    <location>
        <begin position="30"/>
        <end position="32"/>
    </location>
</feature>
<feature type="helix" evidence="6">
    <location>
        <begin position="35"/>
        <end position="61"/>
    </location>
</feature>
<feature type="helix" evidence="6">
    <location>
        <begin position="72"/>
        <end position="90"/>
    </location>
</feature>
<feature type="helix" evidence="6">
    <location>
        <begin position="95"/>
        <end position="105"/>
    </location>
</feature>
<feature type="helix" evidence="6">
    <location>
        <begin position="107"/>
        <end position="110"/>
    </location>
</feature>
<feature type="helix" evidence="6">
    <location>
        <begin position="115"/>
        <end position="124"/>
    </location>
</feature>
<feature type="helix" evidence="6">
    <location>
        <begin position="126"/>
        <end position="151"/>
    </location>
</feature>
<feature type="turn" evidence="6">
    <location>
        <begin position="152"/>
        <end position="154"/>
    </location>
</feature>
<feature type="helix" evidence="6">
    <location>
        <begin position="156"/>
        <end position="159"/>
    </location>
</feature>
<feature type="helix" evidence="6">
    <location>
        <begin position="162"/>
        <end position="173"/>
    </location>
</feature>
<feature type="strand" evidence="6">
    <location>
        <begin position="179"/>
        <end position="181"/>
    </location>
</feature>
<feature type="helix" evidence="8">
    <location>
        <begin position="216"/>
        <end position="223"/>
    </location>
</feature>
<feature type="helix" evidence="8">
    <location>
        <begin position="226"/>
        <end position="230"/>
    </location>
</feature>
<feature type="helix" evidence="8">
    <location>
        <begin position="234"/>
        <end position="238"/>
    </location>
</feature>
<feature type="helix" evidence="8">
    <location>
        <begin position="241"/>
        <end position="250"/>
    </location>
</feature>
<feature type="strand" evidence="8">
    <location>
        <begin position="252"/>
        <end position="256"/>
    </location>
</feature>
<feature type="strand" evidence="8">
    <location>
        <begin position="261"/>
        <end position="263"/>
    </location>
</feature>
<feature type="strand" evidence="8">
    <location>
        <begin position="271"/>
        <end position="278"/>
    </location>
</feature>
<feature type="strand" evidence="8">
    <location>
        <begin position="280"/>
        <end position="286"/>
    </location>
</feature>
<feature type="strand" evidence="8">
    <location>
        <begin position="288"/>
        <end position="290"/>
    </location>
</feature>
<feature type="strand" evidence="7">
    <location>
        <begin position="295"/>
        <end position="297"/>
    </location>
</feature>
<feature type="helix" evidence="8">
    <location>
        <begin position="298"/>
        <end position="303"/>
    </location>
</feature>
<feature type="strand" evidence="8">
    <location>
        <begin position="308"/>
        <end position="323"/>
    </location>
</feature>
<feature type="helix" evidence="8">
    <location>
        <begin position="324"/>
        <end position="333"/>
    </location>
</feature>
<feature type="helix" evidence="8">
    <location>
        <begin position="335"/>
        <end position="352"/>
    </location>
</feature>